<feature type="chain" id="PRO_0000450550" description="Loki profilin-2">
    <location>
        <begin position="1"/>
        <end position="134"/>
    </location>
</feature>
<feature type="region of interest" description="Loki loop" evidence="1">
    <location>
        <begin position="55"/>
        <end position="62"/>
    </location>
</feature>
<feature type="helix" evidence="6">
    <location>
        <begin position="3"/>
        <end position="15"/>
    </location>
</feature>
<feature type="strand" evidence="6">
    <location>
        <begin position="19"/>
        <end position="25"/>
    </location>
</feature>
<feature type="strand" evidence="6">
    <location>
        <begin position="29"/>
        <end position="34"/>
    </location>
</feature>
<feature type="helix" evidence="6">
    <location>
        <begin position="41"/>
        <end position="43"/>
    </location>
</feature>
<feature type="helix" evidence="6">
    <location>
        <begin position="44"/>
        <end position="51"/>
    </location>
</feature>
<feature type="strand" evidence="6">
    <location>
        <begin position="64"/>
        <end position="67"/>
    </location>
</feature>
<feature type="strand" evidence="6">
    <location>
        <begin position="70"/>
        <end position="77"/>
    </location>
</feature>
<feature type="strand" evidence="6">
    <location>
        <begin position="82"/>
        <end position="85"/>
    </location>
</feature>
<feature type="strand" evidence="6">
    <location>
        <begin position="92"/>
        <end position="99"/>
    </location>
</feature>
<feature type="strand" evidence="6">
    <location>
        <begin position="102"/>
        <end position="110"/>
    </location>
</feature>
<feature type="helix" evidence="6">
    <location>
        <begin position="116"/>
        <end position="119"/>
    </location>
</feature>
<feature type="helix" evidence="6">
    <location>
        <begin position="120"/>
        <end position="129"/>
    </location>
</feature>
<feature type="turn" evidence="6">
    <location>
        <begin position="130"/>
        <end position="133"/>
    </location>
</feature>
<evidence type="ECO:0000269" key="1">
    <source>
    </source>
</evidence>
<evidence type="ECO:0000303" key="2">
    <source>
    </source>
</evidence>
<evidence type="ECO:0000305" key="3"/>
<evidence type="ECO:0000305" key="4">
    <source>
    </source>
</evidence>
<evidence type="ECO:0007744" key="5">
    <source>
        <dbReference type="PDB" id="5ZZB"/>
    </source>
</evidence>
<evidence type="ECO:0007829" key="6">
    <source>
        <dbReference type="PDB" id="5ZZB"/>
    </source>
</evidence>
<reference key="1">
    <citation type="journal article" date="2015" name="Nature">
        <title>Complex archaea that bridge the gap between prokaryotes and eukaryotes.</title>
        <authorList>
            <person name="Spang A."/>
            <person name="Saw J.H."/>
            <person name="Jorgensen S.L."/>
            <person name="Zaremba-Niedzwiedzka K."/>
            <person name="Martijn J."/>
            <person name="Lind A.E."/>
            <person name="van Eijk R."/>
            <person name="Schleper C."/>
            <person name="Guy L."/>
            <person name="Ettema T.J."/>
        </authorList>
    </citation>
    <scope>NUCLEOTIDE SEQUENCE [LARGE SCALE GENOMIC DNA]</scope>
    <source>
        <strain>GC14_75</strain>
    </source>
</reference>
<reference evidence="5" key="2">
    <citation type="journal article" date="2018" name="Nature">
        <title>Genomes of Asgard archaea encode profilins that regulate actin.</title>
        <authorList>
            <person name="Akil C."/>
            <person name="Robinson R.C."/>
        </authorList>
    </citation>
    <scope>X-RAY CRYSTALLOGRAPHY (2.30 ANGSTROMS) IN COMPLEX WITH RABBIT ACTIN</scope>
    <scope>FUNCTION</scope>
    <scope>ACTIVITY REGULATION</scope>
    <scope>SUBCELLULAR LOCATION</scope>
    <scope>DOMAIN</scope>
</reference>
<protein>
    <recommendedName>
        <fullName evidence="2">Loki profilin-2</fullName>
    </recommendedName>
</protein>
<name>PROF2_LOKSG</name>
<proteinExistence type="evidence at protein level"/>
<sequence length="134" mass="14622">MSEKIEGIIDDLLNVEENADAIAIIGKDGQIVTQTENWNVSNDLEIINELLNEKLALGEKGITSLSIQGIKYMIVENTEERKIGTNITGKGHVLICPIPIGGPGALIAYVNPRAGPRDLLFNVQEYAKKLINLI</sequence>
<organism>
    <name type="scientific">Lokiarchaeum sp. (strain GC14_75)</name>
    <dbReference type="NCBI Taxonomy" id="1538547"/>
    <lineage>
        <taxon>Archaea</taxon>
        <taxon>Promethearchaeati</taxon>
        <taxon>Promethearchaeota</taxon>
        <taxon>Promethearchaeia</taxon>
        <taxon>Promethearchaeales</taxon>
        <taxon>Promethearchaeaceae</taxon>
        <taxon>Candidatus Lokiarchaeum</taxon>
    </lineage>
</organism>
<gene>
    <name type="ORF">Lokiarch_27400</name>
</gene>
<comment type="function">
    <text evidence="1">Binds to actin and affects the structure of the cytoskeleton. At high concentrations inhibits spontaneous rabbit actin nucleation. This strongly suggests this archaea has a profilin-regulated actin system, and actin-type genes can be identified in this organism.</text>
</comment>
<comment type="activity regulation">
    <text evidence="4">Inhibition of rabbit actin polymerization is reduced by phosphatidylinositol-(4,5)-P2(1,2-dipalmitoyl), a soluble form of the phospholipid phosphatidylinositol, suggesting an unknown lipid might regulate actin-profilin interaction in vivo.</text>
</comment>
<comment type="subcellular location">
    <subcellularLocation>
        <location evidence="4">Cytoplasm</location>
        <location evidence="4">Cytoskeleton</location>
    </subcellularLocation>
</comment>
<comment type="domain">
    <text evidence="4">The Loki loop (specific to some members) becomes ordered on binding to rabbit actin.</text>
</comment>
<comment type="miscellaneous">
    <text evidence="3">It is not clear if Loki profilins 1, 2 and 3 are from the same strain.</text>
</comment>
<comment type="similarity">
    <text evidence="3">Belongs to the Asgard profilin family.</text>
</comment>
<dbReference type="EMBL" id="JYIM01000257">
    <property type="protein sequence ID" value="KKK43364.1"/>
    <property type="molecule type" value="Genomic_DNA"/>
</dbReference>
<dbReference type="PDB" id="5ZZB">
    <property type="method" value="X-ray"/>
    <property type="resolution" value="2.30 A"/>
    <property type="chains" value="A/C=1-134"/>
</dbReference>
<dbReference type="PDBsum" id="5ZZB"/>
<dbReference type="SMR" id="A0A0F8XMN8"/>
<dbReference type="KEGG" id="loki:Lokiarch_27400"/>
<dbReference type="Proteomes" id="UP000034722">
    <property type="component" value="Unassembled WGS sequence"/>
</dbReference>
<dbReference type="GO" id="GO:0005737">
    <property type="term" value="C:cytoplasm"/>
    <property type="evidence" value="ECO:0007669"/>
    <property type="project" value="UniProtKB-KW"/>
</dbReference>
<dbReference type="GO" id="GO:0005856">
    <property type="term" value="C:cytoskeleton"/>
    <property type="evidence" value="ECO:0007669"/>
    <property type="project" value="UniProtKB-SubCell"/>
</dbReference>
<dbReference type="GO" id="GO:0003779">
    <property type="term" value="F:actin binding"/>
    <property type="evidence" value="ECO:0007669"/>
    <property type="project" value="UniProtKB-KW"/>
</dbReference>
<dbReference type="Gene3D" id="3.30.450.30">
    <property type="entry name" value="Dynein light chain 2a, cytoplasmic"/>
    <property type="match status" value="1"/>
</dbReference>
<dbReference type="InterPro" id="IPR048278">
    <property type="entry name" value="PFN"/>
</dbReference>
<dbReference type="InterPro" id="IPR036140">
    <property type="entry name" value="PFN_sf"/>
</dbReference>
<dbReference type="Pfam" id="PF00235">
    <property type="entry name" value="Profilin"/>
    <property type="match status" value="1"/>
</dbReference>
<dbReference type="SUPFAM" id="SSF55770">
    <property type="entry name" value="Profilin (actin-binding protein)"/>
    <property type="match status" value="1"/>
</dbReference>
<accession>A0A0F8XMN8</accession>
<keyword id="KW-0002">3D-structure</keyword>
<keyword id="KW-0009">Actin-binding</keyword>
<keyword id="KW-0963">Cytoplasm</keyword>
<keyword id="KW-0206">Cytoskeleton</keyword>